<protein>
    <recommendedName>
        <fullName evidence="1">Glycine--tRNA ligase beta subunit</fullName>
        <ecNumber evidence="1">6.1.1.14</ecNumber>
    </recommendedName>
    <alternativeName>
        <fullName evidence="1">Glycyl-tRNA synthetase beta subunit</fullName>
        <shortName evidence="1">GlyRS</shortName>
    </alternativeName>
</protein>
<dbReference type="EC" id="6.1.1.14" evidence="1"/>
<dbReference type="EMBL" id="CP000863">
    <property type="protein sequence ID" value="ACC58631.1"/>
    <property type="molecule type" value="Genomic_DNA"/>
</dbReference>
<dbReference type="RefSeq" id="WP_000033889.1">
    <property type="nucleotide sequence ID" value="NZ_CP031380.1"/>
</dbReference>
<dbReference type="SMR" id="B2HZR3"/>
<dbReference type="KEGG" id="abc:ACICU_03321"/>
<dbReference type="HOGENOM" id="CLU_007220_2_2_6"/>
<dbReference type="Proteomes" id="UP000008839">
    <property type="component" value="Chromosome"/>
</dbReference>
<dbReference type="GO" id="GO:0005829">
    <property type="term" value="C:cytosol"/>
    <property type="evidence" value="ECO:0007669"/>
    <property type="project" value="TreeGrafter"/>
</dbReference>
<dbReference type="GO" id="GO:0004814">
    <property type="term" value="F:arginine-tRNA ligase activity"/>
    <property type="evidence" value="ECO:0007669"/>
    <property type="project" value="InterPro"/>
</dbReference>
<dbReference type="GO" id="GO:0005524">
    <property type="term" value="F:ATP binding"/>
    <property type="evidence" value="ECO:0007669"/>
    <property type="project" value="UniProtKB-UniRule"/>
</dbReference>
<dbReference type="GO" id="GO:0004820">
    <property type="term" value="F:glycine-tRNA ligase activity"/>
    <property type="evidence" value="ECO:0007669"/>
    <property type="project" value="UniProtKB-UniRule"/>
</dbReference>
<dbReference type="GO" id="GO:0006420">
    <property type="term" value="P:arginyl-tRNA aminoacylation"/>
    <property type="evidence" value="ECO:0007669"/>
    <property type="project" value="InterPro"/>
</dbReference>
<dbReference type="GO" id="GO:0006426">
    <property type="term" value="P:glycyl-tRNA aminoacylation"/>
    <property type="evidence" value="ECO:0007669"/>
    <property type="project" value="UniProtKB-UniRule"/>
</dbReference>
<dbReference type="HAMAP" id="MF_00255">
    <property type="entry name" value="Gly_tRNA_synth_beta"/>
    <property type="match status" value="1"/>
</dbReference>
<dbReference type="InterPro" id="IPR008909">
    <property type="entry name" value="DALR_anticod-bd"/>
</dbReference>
<dbReference type="InterPro" id="IPR015944">
    <property type="entry name" value="Gly-tRNA-synth_bsu"/>
</dbReference>
<dbReference type="InterPro" id="IPR006194">
    <property type="entry name" value="Gly-tRNA-synth_heterodimer"/>
</dbReference>
<dbReference type="NCBIfam" id="TIGR00211">
    <property type="entry name" value="glyS"/>
    <property type="match status" value="1"/>
</dbReference>
<dbReference type="PANTHER" id="PTHR30075:SF2">
    <property type="entry name" value="GLYCINE--TRNA LIGASE, CHLOROPLASTIC_MITOCHONDRIAL 2"/>
    <property type="match status" value="1"/>
</dbReference>
<dbReference type="PANTHER" id="PTHR30075">
    <property type="entry name" value="GLYCYL-TRNA SYNTHETASE"/>
    <property type="match status" value="1"/>
</dbReference>
<dbReference type="Pfam" id="PF05746">
    <property type="entry name" value="DALR_1"/>
    <property type="match status" value="1"/>
</dbReference>
<dbReference type="Pfam" id="PF02092">
    <property type="entry name" value="tRNA_synt_2f"/>
    <property type="match status" value="1"/>
</dbReference>
<dbReference type="PRINTS" id="PR01045">
    <property type="entry name" value="TRNASYNTHGB"/>
</dbReference>
<dbReference type="SUPFAM" id="SSF109604">
    <property type="entry name" value="HD-domain/PDEase-like"/>
    <property type="match status" value="1"/>
</dbReference>
<dbReference type="PROSITE" id="PS50861">
    <property type="entry name" value="AA_TRNA_LIGASE_II_GLYAB"/>
    <property type="match status" value="1"/>
</dbReference>
<feature type="chain" id="PRO_1000101253" description="Glycine--tRNA ligase beta subunit">
    <location>
        <begin position="1"/>
        <end position="689"/>
    </location>
</feature>
<keyword id="KW-0030">Aminoacyl-tRNA synthetase</keyword>
<keyword id="KW-0067">ATP-binding</keyword>
<keyword id="KW-0963">Cytoplasm</keyword>
<keyword id="KW-0436">Ligase</keyword>
<keyword id="KW-0547">Nucleotide-binding</keyword>
<keyword id="KW-0648">Protein biosynthesis</keyword>
<proteinExistence type="inferred from homology"/>
<name>SYGB_ACIBC</name>
<comment type="catalytic activity">
    <reaction evidence="1">
        <text>tRNA(Gly) + glycine + ATP = glycyl-tRNA(Gly) + AMP + diphosphate</text>
        <dbReference type="Rhea" id="RHEA:16013"/>
        <dbReference type="Rhea" id="RHEA-COMP:9664"/>
        <dbReference type="Rhea" id="RHEA-COMP:9683"/>
        <dbReference type="ChEBI" id="CHEBI:30616"/>
        <dbReference type="ChEBI" id="CHEBI:33019"/>
        <dbReference type="ChEBI" id="CHEBI:57305"/>
        <dbReference type="ChEBI" id="CHEBI:78442"/>
        <dbReference type="ChEBI" id="CHEBI:78522"/>
        <dbReference type="ChEBI" id="CHEBI:456215"/>
        <dbReference type="EC" id="6.1.1.14"/>
    </reaction>
</comment>
<comment type="subunit">
    <text evidence="1">Tetramer of two alpha and two beta subunits.</text>
</comment>
<comment type="subcellular location">
    <subcellularLocation>
        <location evidence="1">Cytoplasm</location>
    </subcellularLocation>
</comment>
<comment type="similarity">
    <text evidence="1">Belongs to the class-II aminoacyl-tRNA synthetase family.</text>
</comment>
<evidence type="ECO:0000255" key="1">
    <source>
        <dbReference type="HAMAP-Rule" id="MF_00255"/>
    </source>
</evidence>
<organism>
    <name type="scientific">Acinetobacter baumannii (strain ACICU)</name>
    <dbReference type="NCBI Taxonomy" id="405416"/>
    <lineage>
        <taxon>Bacteria</taxon>
        <taxon>Pseudomonadati</taxon>
        <taxon>Pseudomonadota</taxon>
        <taxon>Gammaproteobacteria</taxon>
        <taxon>Moraxellales</taxon>
        <taxon>Moraxellaceae</taxon>
        <taxon>Acinetobacter</taxon>
        <taxon>Acinetobacter calcoaceticus/baumannii complex</taxon>
    </lineage>
</organism>
<sequence length="689" mass="75035">MSKHTVLFELGCEELPPKSLKTLRDALQAETVKGLNEAGLDFASVEAYAAPRRLALKIVDVDAAQADTQKRFDGPAVQAAYDAEGKPTKALEGFMRGQGITVDQLSTFQAGKVEKVCYLKDVKGQSLDALLPQILQTALDNLPIAKRMRSAASRTEFVRPVKWVVLLKDDQVIEATIQDHKAGNVTYGHRFHAPEAVTLAHANDYLAALEKAYVVANFEKRQATIQEQVKKLADEVNATAIVPADLLDEVTSLVEWPVALRATFEERYLAVPQEALITTMQDNQKYFCLINAEGKLQPYFITVSNIESKDPTQIIEGNEKVVRPRLSDAEFFFLQDQKQPLASRKEKLANMVFQAQLGTLWDKSTRIAKLAVALSSITGANPADAEKAALLAKCDLTSELVGEFPELQGIAGTYYARIEGENTEVSEALGEQYLPKFAGDVLPKTKTGTTIALADRLDTLVGIFGIGQAPTGSKDPFALRRSAIGILRLIIENELDVTIEELVNLALQGYGDIVKDHDKTRADAVAFLEGRYRAKYEDQGVAVDVLQAVQALAPKSPLDFDKRVNAVNHFRTLPEAAALAAANKRVANILAKEAAPEGSVIEANLVEDAEKALFAELQAVTPVVEPLLAAKDYTAALSKLAALRAPIDAFFDGVMVMADDADLKANRLRLLAQLRNLFTAVADVSVLQG</sequence>
<reference key="1">
    <citation type="journal article" date="2008" name="Antimicrob. Agents Chemother.">
        <title>Whole-genome pyrosequencing of an epidemic multidrug-resistant Acinetobacter baumannii strain belonging to the European clone II group.</title>
        <authorList>
            <person name="Iacono M."/>
            <person name="Villa L."/>
            <person name="Fortini D."/>
            <person name="Bordoni R."/>
            <person name="Imperi F."/>
            <person name="Bonnal R.J."/>
            <person name="Sicheritz-Ponten T."/>
            <person name="De Bellis G."/>
            <person name="Visca P."/>
            <person name="Cassone A."/>
            <person name="Carattoli A."/>
        </authorList>
    </citation>
    <scope>NUCLEOTIDE SEQUENCE [LARGE SCALE GENOMIC DNA]</scope>
    <source>
        <strain>ACICU</strain>
    </source>
</reference>
<accession>B2HZR3</accession>
<gene>
    <name evidence="1" type="primary">glyS</name>
    <name type="ordered locus">ACICU_03321</name>
</gene>